<proteinExistence type="evidence at protein level"/>
<sequence length="360" mass="41255">MLVPTALAARLLSLFQQQLGSLWSGLAMLFCWLRIALGWPDPGKGQPRVRGEPKETQETHEDPGSAQPTTPVSVNYHFTRQCNYKCGFCFHTAKTSFVLPLEEAKRGLLLLKQAGMEKINFSGGEPFLQDRGEYLGKLVRFCKEELALPSVSIVSNGSLIRERWFKDYGDYLDILAISCDSFDEQVNVLIGRGQGKKNHVENLQKLRKWCRDYKVAFKINSVINRFNVDEDMNEHIKALSPVRWKVFQCLLIEGENSGEDALREAERFLISNEEFEAFLQRHKDVSCLVPESNQKMKDSYLILDEYMRFLNCTGGRKDPSRSILDVGVEEAIKFSGFDEKMFLKRGGKYVWSKADLKLDW</sequence>
<dbReference type="EC" id="4.2.-.-" evidence="3"/>
<dbReference type="EMBL" id="Y07704">
    <property type="protein sequence ID" value="CAA68971.1"/>
    <property type="molecule type" value="mRNA"/>
</dbReference>
<dbReference type="RefSeq" id="NP_620236.1">
    <property type="nucleotide sequence ID" value="NM_138881.2"/>
</dbReference>
<dbReference type="SMR" id="O70600"/>
<dbReference type="FunCoup" id="O70600">
    <property type="interactions" value="119"/>
</dbReference>
<dbReference type="STRING" id="10116.ENSRNOP00000010092"/>
<dbReference type="PhosphoSitePlus" id="O70600"/>
<dbReference type="PaxDb" id="10116-ENSRNOP00000010092"/>
<dbReference type="GeneID" id="65190"/>
<dbReference type="KEGG" id="rno:65190"/>
<dbReference type="AGR" id="RGD:620495"/>
<dbReference type="CTD" id="91543"/>
<dbReference type="RGD" id="620495">
    <property type="gene designation" value="Rsad2"/>
</dbReference>
<dbReference type="eggNOG" id="ENOG502QQMH">
    <property type="taxonomic scope" value="Eukaryota"/>
</dbReference>
<dbReference type="HOGENOM" id="CLU_049058_2_1_1"/>
<dbReference type="InParanoid" id="O70600"/>
<dbReference type="OrthoDB" id="52305at9989"/>
<dbReference type="PhylomeDB" id="O70600"/>
<dbReference type="PRO" id="PR:O70600"/>
<dbReference type="Proteomes" id="UP000002494">
    <property type="component" value="Unplaced"/>
</dbReference>
<dbReference type="GO" id="GO:0005783">
    <property type="term" value="C:endoplasmic reticulum"/>
    <property type="evidence" value="ECO:0000250"/>
    <property type="project" value="UniProtKB"/>
</dbReference>
<dbReference type="GO" id="GO:0005789">
    <property type="term" value="C:endoplasmic reticulum membrane"/>
    <property type="evidence" value="ECO:0000250"/>
    <property type="project" value="UniProtKB"/>
</dbReference>
<dbReference type="GO" id="GO:0005794">
    <property type="term" value="C:Golgi apparatus"/>
    <property type="evidence" value="ECO:0007669"/>
    <property type="project" value="UniProtKB-SubCell"/>
</dbReference>
<dbReference type="GO" id="GO:0005811">
    <property type="term" value="C:lipid droplet"/>
    <property type="evidence" value="ECO:0000250"/>
    <property type="project" value="UniProtKB"/>
</dbReference>
<dbReference type="GO" id="GO:0005743">
    <property type="term" value="C:mitochondrial inner membrane"/>
    <property type="evidence" value="ECO:0000266"/>
    <property type="project" value="RGD"/>
</dbReference>
<dbReference type="GO" id="GO:0005741">
    <property type="term" value="C:mitochondrial outer membrane"/>
    <property type="evidence" value="ECO:0000266"/>
    <property type="project" value="RGD"/>
</dbReference>
<dbReference type="GO" id="GO:0005739">
    <property type="term" value="C:mitochondrion"/>
    <property type="evidence" value="ECO:0000266"/>
    <property type="project" value="RGD"/>
</dbReference>
<dbReference type="GO" id="GO:0051539">
    <property type="term" value="F:4 iron, 4 sulfur cluster binding"/>
    <property type="evidence" value="ECO:0000250"/>
    <property type="project" value="UniProtKB"/>
</dbReference>
<dbReference type="GO" id="GO:0016829">
    <property type="term" value="F:lyase activity"/>
    <property type="evidence" value="ECO:0007669"/>
    <property type="project" value="UniProtKB-KW"/>
</dbReference>
<dbReference type="GO" id="GO:0046872">
    <property type="term" value="F:metal ion binding"/>
    <property type="evidence" value="ECO:0007669"/>
    <property type="project" value="UniProtKB-KW"/>
</dbReference>
<dbReference type="GO" id="GO:0035710">
    <property type="term" value="P:CD4-positive, alpha-beta T cell activation"/>
    <property type="evidence" value="ECO:0000250"/>
    <property type="project" value="UniProtKB"/>
</dbReference>
<dbReference type="GO" id="GO:0043367">
    <property type="term" value="P:CD4-positive, alpha-beta T cell differentiation"/>
    <property type="evidence" value="ECO:0000250"/>
    <property type="project" value="UniProtKB"/>
</dbReference>
<dbReference type="GO" id="GO:0051607">
    <property type="term" value="P:defense response to virus"/>
    <property type="evidence" value="ECO:0000250"/>
    <property type="project" value="UniProtKB"/>
</dbReference>
<dbReference type="GO" id="GO:0045087">
    <property type="term" value="P:innate immune response"/>
    <property type="evidence" value="ECO:0007669"/>
    <property type="project" value="UniProtKB-KW"/>
</dbReference>
<dbReference type="GO" id="GO:0050709">
    <property type="term" value="P:negative regulation of protein secretion"/>
    <property type="evidence" value="ECO:0000250"/>
    <property type="project" value="UniProtKB"/>
</dbReference>
<dbReference type="GO" id="GO:0045071">
    <property type="term" value="P:negative regulation of viral genome replication"/>
    <property type="evidence" value="ECO:0000266"/>
    <property type="project" value="RGD"/>
</dbReference>
<dbReference type="GO" id="GO:0001503">
    <property type="term" value="P:ossification"/>
    <property type="evidence" value="ECO:0000314"/>
    <property type="project" value="RGD"/>
</dbReference>
<dbReference type="GO" id="GO:0050778">
    <property type="term" value="P:positive regulation of immune response"/>
    <property type="evidence" value="ECO:0000318"/>
    <property type="project" value="GO_Central"/>
</dbReference>
<dbReference type="GO" id="GO:2000553">
    <property type="term" value="P:positive regulation of T-helper 2 cell cytokine production"/>
    <property type="evidence" value="ECO:0000250"/>
    <property type="project" value="UniProtKB"/>
</dbReference>
<dbReference type="GO" id="GO:0034157">
    <property type="term" value="P:positive regulation of toll-like receptor 7 signaling pathway"/>
    <property type="evidence" value="ECO:0000250"/>
    <property type="project" value="UniProtKB"/>
</dbReference>
<dbReference type="GO" id="GO:0034165">
    <property type="term" value="P:positive regulation of toll-like receptor 9 signaling pathway"/>
    <property type="evidence" value="ECO:0000250"/>
    <property type="project" value="UniProtKB"/>
</dbReference>
<dbReference type="GO" id="GO:0030278">
    <property type="term" value="P:regulation of ossification"/>
    <property type="evidence" value="ECO:0000314"/>
    <property type="project" value="RGD"/>
</dbReference>
<dbReference type="GO" id="GO:0009615">
    <property type="term" value="P:response to virus"/>
    <property type="evidence" value="ECO:0000250"/>
    <property type="project" value="UniProtKB"/>
</dbReference>
<dbReference type="CDD" id="cd01335">
    <property type="entry name" value="Radical_SAM"/>
    <property type="match status" value="1"/>
</dbReference>
<dbReference type="FunFam" id="3.20.20.70:FF:000152">
    <property type="entry name" value="radical S-adenosyl methionine domain-containing protein 2"/>
    <property type="match status" value="1"/>
</dbReference>
<dbReference type="Gene3D" id="3.20.20.70">
    <property type="entry name" value="Aldolase class I"/>
    <property type="match status" value="1"/>
</dbReference>
<dbReference type="InterPro" id="IPR013785">
    <property type="entry name" value="Aldolase_TIM"/>
</dbReference>
<dbReference type="InterPro" id="IPR006638">
    <property type="entry name" value="Elp3/MiaA/NifB-like_rSAM"/>
</dbReference>
<dbReference type="InterPro" id="IPR026372">
    <property type="entry name" value="RSAD2"/>
</dbReference>
<dbReference type="InterPro" id="IPR051196">
    <property type="entry name" value="RSAD2/Viperin_antiviral"/>
</dbReference>
<dbReference type="InterPro" id="IPR007197">
    <property type="entry name" value="rSAM"/>
</dbReference>
<dbReference type="NCBIfam" id="TIGR04278">
    <property type="entry name" value="viperin"/>
    <property type="match status" value="1"/>
</dbReference>
<dbReference type="NCBIfam" id="NF038283">
    <property type="entry name" value="viperin_w_prok"/>
    <property type="match status" value="1"/>
</dbReference>
<dbReference type="PANTHER" id="PTHR21339">
    <property type="entry name" value="RADICAL S-ADENOSYL METHIONINE DOMAIN-CONTAINING PROTEIN 2"/>
    <property type="match status" value="1"/>
</dbReference>
<dbReference type="PANTHER" id="PTHR21339:SF0">
    <property type="entry name" value="S-ADENOSYLMETHIONINE-DEPENDENT NUCLEOTIDE DEHYDRATASE RSAD2"/>
    <property type="match status" value="1"/>
</dbReference>
<dbReference type="Pfam" id="PF13353">
    <property type="entry name" value="Fer4_12"/>
    <property type="match status" value="1"/>
</dbReference>
<dbReference type="Pfam" id="PF04055">
    <property type="entry name" value="Radical_SAM"/>
    <property type="match status" value="1"/>
</dbReference>
<dbReference type="SFLD" id="SFLDG01088">
    <property type="entry name" value="antiviral_proteins"/>
    <property type="match status" value="1"/>
</dbReference>
<dbReference type="SFLD" id="SFLDG01067">
    <property type="entry name" value="SPASM/twitch_domain_containing"/>
    <property type="match status" value="1"/>
</dbReference>
<dbReference type="SFLD" id="SFLDF00318">
    <property type="entry name" value="Viperin"/>
    <property type="match status" value="1"/>
</dbReference>
<dbReference type="SMART" id="SM00729">
    <property type="entry name" value="Elp3"/>
    <property type="match status" value="1"/>
</dbReference>
<dbReference type="SUPFAM" id="SSF102114">
    <property type="entry name" value="Radical SAM enzymes"/>
    <property type="match status" value="1"/>
</dbReference>
<dbReference type="PROSITE" id="PS51918">
    <property type="entry name" value="RADICAL_SAM"/>
    <property type="match status" value="1"/>
</dbReference>
<reference evidence="8 9" key="1">
    <citation type="journal article" date="2000" name="FASEB J.">
        <title>Best5: a novel interferon-inducible gene expressed during bone formation.</title>
        <authorList>
            <person name="Grewal T.S."/>
            <person name="Genever P.G."/>
            <person name="Brabbs A.C."/>
            <person name="Birch M."/>
            <person name="Skerry T.M."/>
        </authorList>
    </citation>
    <scope>NUCLEOTIDE SEQUENCE [MRNA]</scope>
    <scope>TISSUE SPECIFICITY</scope>
    <scope>DEVELOPMENTAL STAGE</scope>
    <scope>INDUCTION</scope>
    <source>
        <strain evidence="9">Wistar</strain>
        <tissue evidence="9">Bone</tissue>
    </source>
</reference>
<reference key="2">
    <citation type="journal article" date="2022" name="Front. Mol. Biosci.">
        <title>Radical-SAM dependent nucleotide dehydratase (SAND), rectification of the names of an ancient iron-sulfur enzyme using NC-IUBMB recommendations.</title>
        <authorList>
            <person name="Ji Y."/>
            <person name="Wei L."/>
            <person name="Da A."/>
            <person name="Stark H."/>
            <person name="Hagedoorn P.-L."/>
            <person name="Ciofi-Baffoni S."/>
            <person name="Cowley S.A."/>
            <person name="Louro R.O."/>
            <person name="Todorovic S."/>
            <person name="Mroginski M.A."/>
            <person name="Nicolet Y."/>
            <person name="Roessler M.M."/>
            <person name="Le Brun N.E."/>
            <person name="Piccioli M."/>
            <person name="James W.S."/>
            <person name="Hagen W.R."/>
            <person name="Ebrahimi K.H."/>
        </authorList>
    </citation>
    <scope>NOMENCLATURE</scope>
</reference>
<organism>
    <name type="scientific">Rattus norvegicus</name>
    <name type="common">Rat</name>
    <dbReference type="NCBI Taxonomy" id="10116"/>
    <lineage>
        <taxon>Eukaryota</taxon>
        <taxon>Metazoa</taxon>
        <taxon>Chordata</taxon>
        <taxon>Craniata</taxon>
        <taxon>Vertebrata</taxon>
        <taxon>Euteleostomi</taxon>
        <taxon>Mammalia</taxon>
        <taxon>Eutheria</taxon>
        <taxon>Euarchontoglires</taxon>
        <taxon>Glires</taxon>
        <taxon>Rodentia</taxon>
        <taxon>Myomorpha</taxon>
        <taxon>Muroidea</taxon>
        <taxon>Muridae</taxon>
        <taxon>Murinae</taxon>
        <taxon>Rattus</taxon>
    </lineage>
</organism>
<gene>
    <name evidence="3" type="primary">Rsad2</name>
    <name evidence="10" type="synonym">Best5</name>
</gene>
<accession>O70600</accession>
<comment type="function">
    <text evidence="3">Interferon-inducible antiviral protein which plays a major role in the cell antiviral state induced by type I and type II interferon. Catalyzes the conversion of cytidine triphosphate (CTP) to 3'-deoxy-3',4'-didehydro-CTP (ddhCTP) via a SAM-dependent radical mechanism. In turn, ddhCTP acts as a chain terminator for the RNA-dependent RNA polymerases from multiple viruses and directly inhibits viral replication. Therefore, inhibits a wide range of DNA and RNA viruses. Also promotes TLR7 and TLR9-dependent production of IFN-beta production in plasmacytoid dendritic cells (pDCs) by facilitating 'Lys-63'-linked ubiquitination of IRAK1 by TRAF6. Plays a role in CD4+ T-cells activation and differentiation. Facilitates T-cell receptor (TCR)-mediated GATA3 activation and optimal T-helper 2 (Th2) cytokine production by modulating NFKB1 and JUNB activities. Can inhibit secretion of soluble proteins.</text>
</comment>
<comment type="catalytic activity">
    <reaction evidence="3">
        <text>CTP + AH2 + S-adenosyl-L-methionine = 3'-deoxy-3',4'-didehydro-CTP + 5'-deoxyadenosine + L-methionine + A + H2O + H(+)</text>
        <dbReference type="Rhea" id="RHEA:65944"/>
        <dbReference type="ChEBI" id="CHEBI:13193"/>
        <dbReference type="ChEBI" id="CHEBI:15377"/>
        <dbReference type="ChEBI" id="CHEBI:15378"/>
        <dbReference type="ChEBI" id="CHEBI:17319"/>
        <dbReference type="ChEBI" id="CHEBI:17499"/>
        <dbReference type="ChEBI" id="CHEBI:37563"/>
        <dbReference type="ChEBI" id="CHEBI:57844"/>
        <dbReference type="ChEBI" id="CHEBI:59789"/>
        <dbReference type="ChEBI" id="CHEBI:166821"/>
    </reaction>
</comment>
<comment type="cofactor">
    <cofactor evidence="3">
        <name>[4Fe-4S] cluster</name>
        <dbReference type="ChEBI" id="CHEBI:49883"/>
    </cofactor>
    <text evidence="3">Binds 1 [4Fe-4S] cluster. The cluster is coordinated with 3 cysteines and an exchangeable S-adenosyl-L-methionine.</text>
</comment>
<comment type="activity regulation">
    <text evidence="3">IRAK1 and TRAF6 synergistically activate RSAD2 increasing its activity with CTP as substrate about 10-fold.</text>
</comment>
<comment type="subunit">
    <text evidence="1 3">Homodimer. Interacts with IRAK1 and TRAF6. Interacts with FPPS. Interacts with HADHB. Interacts (via C-terminus) with VAPA/VAP33 (via C-terminus).</text>
</comment>
<comment type="subcellular location">
    <subcellularLocation>
        <location evidence="3">Endoplasmic reticulum membrane</location>
        <topology evidence="3">Peripheral membrane protein</topology>
        <orientation evidence="3">Cytoplasmic side</orientation>
    </subcellularLocation>
    <subcellularLocation>
        <location evidence="3">Golgi apparatus</location>
    </subcellularLocation>
    <subcellularLocation>
        <location evidence="3">Endoplasmic reticulum</location>
    </subcellularLocation>
    <subcellularLocation>
        <location evidence="3">Lipid droplet</location>
    </subcellularLocation>
    <subcellularLocation>
        <location evidence="3">Mitochondrion</location>
    </subcellularLocation>
    <subcellularLocation>
        <location evidence="3">Mitochondrion inner membrane</location>
    </subcellularLocation>
    <subcellularLocation>
        <location evidence="3">Mitochondrion outer membrane</location>
    </subcellularLocation>
</comment>
<comment type="tissue specificity">
    <text evidence="6">In neonatal rat tibia, specifically localized in cells of the periosteum, in osteoblasts lining endosteal and peristeal bone surfaces, to articular surfaces of cartilage and in perichondral cells but not in chondrocytes (at protein level). Expressed predominantly in bone marrow and spleen.</text>
</comment>
<comment type="developmental stage">
    <text evidence="6">Not detected in undifferentiated primary osteoblasts. Expression increases during differentiation and declines to much reduced levels in mature osteoblasts.</text>
</comment>
<comment type="induction">
    <text evidence="6">By interferon type I, type II and LPS. Interferon alpha induction is rapid and transient, peaks 4-6 hours after stimulation and returns to basal levels 24 hours after stimulation. Interferon gamma elicits a more prolonged response where expression remains elevated 48 hours after stimulation. Induced by infection with Vesicular stomatitis virus and pseudorabies virus, presumably through type I interferon pathway.</text>
</comment>
<comment type="domain">
    <text evidence="1">The N-terminal region (1-41) is necessary for its localization to the endoplasmic reticulum membrane and lipid droplet.</text>
</comment>
<comment type="PTM">
    <text evidence="3">Acetylated by HAT1. HAT1-mediated acetylation of Lys-196 in turn recruits UBE4A that stimulates RSAD2 polyubiquitination leading to proteasomal degradation.</text>
</comment>
<comment type="PTM">
    <text evidence="3">'Lys-6'-linked polyubiquitination at Lys-205 leads to RSAD2 protein degradation.</text>
</comment>
<comment type="similarity">
    <text evidence="8">Belongs to the radical SAM superfamily. RSAD2 family.</text>
</comment>
<name>RSAD2_RAT</name>
<evidence type="ECO:0000250" key="1"/>
<evidence type="ECO:0000250" key="2">
    <source>
        <dbReference type="UniProtKB" id="Q8CBB9"/>
    </source>
</evidence>
<evidence type="ECO:0000250" key="3">
    <source>
        <dbReference type="UniProtKB" id="Q8WXG1"/>
    </source>
</evidence>
<evidence type="ECO:0000255" key="4">
    <source>
        <dbReference type="PROSITE-ProRule" id="PRU01266"/>
    </source>
</evidence>
<evidence type="ECO:0000256" key="5">
    <source>
        <dbReference type="SAM" id="MobiDB-lite"/>
    </source>
</evidence>
<evidence type="ECO:0000269" key="6">
    <source>
    </source>
</evidence>
<evidence type="ECO:0000303" key="7">
    <source>
    </source>
</evidence>
<evidence type="ECO:0000305" key="8"/>
<evidence type="ECO:0000312" key="9">
    <source>
        <dbReference type="EMBL" id="CAA68971.1"/>
    </source>
</evidence>
<evidence type="ECO:0000312" key="10">
    <source>
        <dbReference type="RGD" id="620495"/>
    </source>
</evidence>
<protein>
    <recommendedName>
        <fullName evidence="7">S-adenosylmethionine-dependent nucleotide dehydratase RSAD2</fullName>
        <shortName evidence="7">SAND</shortName>
        <ecNumber evidence="3">4.2.-.-</ecNumber>
    </recommendedName>
    <alternativeName>
        <fullName>Bone-expressed sequence tag 5 protein</fullName>
    </alternativeName>
    <alternativeName>
        <fullName evidence="10">Radical S-adenosyl methionine domain-containing protein 2</fullName>
    </alternativeName>
    <alternativeName>
        <fullName>Virus inhibitory protein, endoplasmic reticulum-associated, interferon-inducible</fullName>
        <shortName>Viperin</shortName>
    </alternativeName>
</protein>
<feature type="chain" id="PRO_0000309586" description="S-adenosylmethionine-dependent nucleotide dehydratase RSAD2">
    <location>
        <begin position="1"/>
        <end position="360"/>
    </location>
</feature>
<feature type="domain" description="Radical SAM core" evidence="4">
    <location>
        <begin position="68"/>
        <end position="288"/>
    </location>
</feature>
<feature type="region of interest" description="Disordered" evidence="5">
    <location>
        <begin position="44"/>
        <end position="71"/>
    </location>
</feature>
<feature type="compositionally biased region" description="Basic and acidic residues" evidence="5">
    <location>
        <begin position="49"/>
        <end position="63"/>
    </location>
</feature>
<feature type="binding site" evidence="2">
    <location>
        <position position="82"/>
    </location>
    <ligand>
        <name>[4Fe-4S] cluster</name>
        <dbReference type="ChEBI" id="CHEBI:49883"/>
        <note>4Fe-4S-S-AdoMet</note>
    </ligand>
</feature>
<feature type="binding site" evidence="2">
    <location>
        <position position="86"/>
    </location>
    <ligand>
        <name>[4Fe-4S] cluster</name>
        <dbReference type="ChEBI" id="CHEBI:49883"/>
        <note>4Fe-4S-S-AdoMet</note>
    </ligand>
</feature>
<feature type="binding site" evidence="2">
    <location>
        <position position="89"/>
    </location>
    <ligand>
        <name>[4Fe-4S] cluster</name>
        <dbReference type="ChEBI" id="CHEBI:49883"/>
        <note>4Fe-4S-S-AdoMet</note>
    </ligand>
</feature>
<feature type="modified residue" description="N6-acetyllysine" evidence="3">
    <location>
        <position position="196"/>
    </location>
</feature>
<feature type="cross-link" description="Glycyl lysine isopeptide (Lys-Gly) (interchain with G-Cter in ubiquitin)" evidence="3">
    <location>
        <position position="205"/>
    </location>
</feature>
<keyword id="KW-0004">4Fe-4S</keyword>
<keyword id="KW-0007">Acetylation</keyword>
<keyword id="KW-0051">Antiviral defense</keyword>
<keyword id="KW-0256">Endoplasmic reticulum</keyword>
<keyword id="KW-0333">Golgi apparatus</keyword>
<keyword id="KW-0391">Immunity</keyword>
<keyword id="KW-0399">Innate immunity</keyword>
<keyword id="KW-0408">Iron</keyword>
<keyword id="KW-0411">Iron-sulfur</keyword>
<keyword id="KW-1017">Isopeptide bond</keyword>
<keyword id="KW-0551">Lipid droplet</keyword>
<keyword id="KW-0456">Lyase</keyword>
<keyword id="KW-0472">Membrane</keyword>
<keyword id="KW-0479">Metal-binding</keyword>
<keyword id="KW-0496">Mitochondrion</keyword>
<keyword id="KW-0999">Mitochondrion inner membrane</keyword>
<keyword id="KW-1000">Mitochondrion outer membrane</keyword>
<keyword id="KW-1185">Reference proteome</keyword>
<keyword id="KW-0949">S-adenosyl-L-methionine</keyword>
<keyword id="KW-0832">Ubl conjugation</keyword>